<reference key="1">
    <citation type="journal article" date="2004" name="Proc. Natl. Acad. Sci. U.S.A.">
        <title>Insights into the evolution of Yersinia pestis through whole-genome comparison with Yersinia pseudotuberculosis.</title>
        <authorList>
            <person name="Chain P.S.G."/>
            <person name="Carniel E."/>
            <person name="Larimer F.W."/>
            <person name="Lamerdin J."/>
            <person name="Stoutland P.O."/>
            <person name="Regala W.M."/>
            <person name="Georgescu A.M."/>
            <person name="Vergez L.M."/>
            <person name="Land M.L."/>
            <person name="Motin V.L."/>
            <person name="Brubaker R.R."/>
            <person name="Fowler J."/>
            <person name="Hinnebusch J."/>
            <person name="Marceau M."/>
            <person name="Medigue C."/>
            <person name="Simonet M."/>
            <person name="Chenal-Francisque V."/>
            <person name="Souza B."/>
            <person name="Dacheux D."/>
            <person name="Elliott J.M."/>
            <person name="Derbise A."/>
            <person name="Hauser L.J."/>
            <person name="Garcia E."/>
        </authorList>
    </citation>
    <scope>NUCLEOTIDE SEQUENCE [LARGE SCALE GENOMIC DNA]</scope>
    <source>
        <strain>IP32953</strain>
    </source>
</reference>
<evidence type="ECO:0000255" key="1">
    <source>
        <dbReference type="HAMAP-Rule" id="MF_00473"/>
    </source>
</evidence>
<proteinExistence type="inferred from homology"/>
<protein>
    <recommendedName>
        <fullName evidence="1">Glucose-6-phosphate isomerase</fullName>
        <shortName evidence="1">GPI</shortName>
        <ecNumber evidence="1">5.3.1.9</ecNumber>
    </recommendedName>
    <alternativeName>
        <fullName evidence="1">Phosphoglucose isomerase</fullName>
        <shortName evidence="1">PGI</shortName>
    </alternativeName>
    <alternativeName>
        <fullName evidence="1">Phosphohexose isomerase</fullName>
        <shortName evidence="1">PHI</shortName>
    </alternativeName>
</protein>
<keyword id="KW-0963">Cytoplasm</keyword>
<keyword id="KW-0312">Gluconeogenesis</keyword>
<keyword id="KW-0324">Glycolysis</keyword>
<keyword id="KW-0413">Isomerase</keyword>
<gene>
    <name evidence="1" type="primary">pgi</name>
    <name type="ordered locus">YPTB3649</name>
</gene>
<name>G6PI_YERPS</name>
<dbReference type="EC" id="5.3.1.9" evidence="1"/>
<dbReference type="EMBL" id="BX936398">
    <property type="protein sequence ID" value="CAH22887.1"/>
    <property type="molecule type" value="Genomic_DNA"/>
</dbReference>
<dbReference type="RefSeq" id="WP_002212085.1">
    <property type="nucleotide sequence ID" value="NZ_CP009712.1"/>
</dbReference>
<dbReference type="SMR" id="Q664W9"/>
<dbReference type="GeneID" id="57975003"/>
<dbReference type="KEGG" id="ypo:BZ17_2949"/>
<dbReference type="KEGG" id="yps:YPTB3649"/>
<dbReference type="PATRIC" id="fig|273123.14.peg.3083"/>
<dbReference type="UniPathway" id="UPA00109">
    <property type="reaction ID" value="UER00181"/>
</dbReference>
<dbReference type="UniPathway" id="UPA00138"/>
<dbReference type="Proteomes" id="UP000001011">
    <property type="component" value="Chromosome"/>
</dbReference>
<dbReference type="GO" id="GO:0005829">
    <property type="term" value="C:cytosol"/>
    <property type="evidence" value="ECO:0007669"/>
    <property type="project" value="TreeGrafter"/>
</dbReference>
<dbReference type="GO" id="GO:0097367">
    <property type="term" value="F:carbohydrate derivative binding"/>
    <property type="evidence" value="ECO:0007669"/>
    <property type="project" value="InterPro"/>
</dbReference>
<dbReference type="GO" id="GO:0004347">
    <property type="term" value="F:glucose-6-phosphate isomerase activity"/>
    <property type="evidence" value="ECO:0007669"/>
    <property type="project" value="UniProtKB-UniRule"/>
</dbReference>
<dbReference type="GO" id="GO:0048029">
    <property type="term" value="F:monosaccharide binding"/>
    <property type="evidence" value="ECO:0007669"/>
    <property type="project" value="TreeGrafter"/>
</dbReference>
<dbReference type="GO" id="GO:0006094">
    <property type="term" value="P:gluconeogenesis"/>
    <property type="evidence" value="ECO:0007669"/>
    <property type="project" value="UniProtKB-UniRule"/>
</dbReference>
<dbReference type="GO" id="GO:0051156">
    <property type="term" value="P:glucose 6-phosphate metabolic process"/>
    <property type="evidence" value="ECO:0007669"/>
    <property type="project" value="TreeGrafter"/>
</dbReference>
<dbReference type="GO" id="GO:0006096">
    <property type="term" value="P:glycolytic process"/>
    <property type="evidence" value="ECO:0007669"/>
    <property type="project" value="UniProtKB-UniRule"/>
</dbReference>
<dbReference type="CDD" id="cd05015">
    <property type="entry name" value="SIS_PGI_1"/>
    <property type="match status" value="1"/>
</dbReference>
<dbReference type="CDD" id="cd05016">
    <property type="entry name" value="SIS_PGI_2"/>
    <property type="match status" value="1"/>
</dbReference>
<dbReference type="FunFam" id="1.10.1390.10:FF:000001">
    <property type="entry name" value="Glucose-6-phosphate isomerase"/>
    <property type="match status" value="1"/>
</dbReference>
<dbReference type="FunFam" id="3.40.50.10490:FF:000004">
    <property type="entry name" value="Glucose-6-phosphate isomerase"/>
    <property type="match status" value="1"/>
</dbReference>
<dbReference type="Gene3D" id="1.10.1390.10">
    <property type="match status" value="1"/>
</dbReference>
<dbReference type="Gene3D" id="3.40.50.10490">
    <property type="entry name" value="Glucose-6-phosphate isomerase like protein, domain 1"/>
    <property type="match status" value="2"/>
</dbReference>
<dbReference type="HAMAP" id="MF_00473">
    <property type="entry name" value="G6P_isomerase"/>
    <property type="match status" value="1"/>
</dbReference>
<dbReference type="InterPro" id="IPR001672">
    <property type="entry name" value="G6P_Isomerase"/>
</dbReference>
<dbReference type="InterPro" id="IPR023096">
    <property type="entry name" value="G6P_Isomerase_C"/>
</dbReference>
<dbReference type="InterPro" id="IPR018189">
    <property type="entry name" value="Phosphoglucose_isomerase_CS"/>
</dbReference>
<dbReference type="InterPro" id="IPR046348">
    <property type="entry name" value="SIS_dom_sf"/>
</dbReference>
<dbReference type="InterPro" id="IPR035476">
    <property type="entry name" value="SIS_PGI_1"/>
</dbReference>
<dbReference type="InterPro" id="IPR035482">
    <property type="entry name" value="SIS_PGI_2"/>
</dbReference>
<dbReference type="NCBIfam" id="NF001211">
    <property type="entry name" value="PRK00179.1"/>
    <property type="match status" value="1"/>
</dbReference>
<dbReference type="PANTHER" id="PTHR11469">
    <property type="entry name" value="GLUCOSE-6-PHOSPHATE ISOMERASE"/>
    <property type="match status" value="1"/>
</dbReference>
<dbReference type="PANTHER" id="PTHR11469:SF1">
    <property type="entry name" value="GLUCOSE-6-PHOSPHATE ISOMERASE"/>
    <property type="match status" value="1"/>
</dbReference>
<dbReference type="Pfam" id="PF00342">
    <property type="entry name" value="PGI"/>
    <property type="match status" value="1"/>
</dbReference>
<dbReference type="PRINTS" id="PR00662">
    <property type="entry name" value="G6PISOMERASE"/>
</dbReference>
<dbReference type="SUPFAM" id="SSF53697">
    <property type="entry name" value="SIS domain"/>
    <property type="match status" value="1"/>
</dbReference>
<dbReference type="PROSITE" id="PS00765">
    <property type="entry name" value="P_GLUCOSE_ISOMERASE_1"/>
    <property type="match status" value="1"/>
</dbReference>
<dbReference type="PROSITE" id="PS00174">
    <property type="entry name" value="P_GLUCOSE_ISOMERASE_2"/>
    <property type="match status" value="1"/>
</dbReference>
<dbReference type="PROSITE" id="PS51463">
    <property type="entry name" value="P_GLUCOSE_ISOMERASE_3"/>
    <property type="match status" value="1"/>
</dbReference>
<sequence>MKNINPSQTAAWKALQQHFEQMKDVTISSLFAKDDQRFNRFSATFDDQMLVDFSKNRITSETLEKLQDLAKETDLAGAIKSMFSGEKINRTEDRAVLHIALRNRSNTPIVVDGKDVMPEVNAVLAKMKQFCDRVISGDWKGYTGKAITDVVNIGIGGSDLGPYMVTEALRPYKNHLNMHFVSNVDGTHIAEALKPLNPETTLFLVASKTFTTQETMTNAHSARDWFLSAAGDPAHVAKHFAALSTNAKAVGEFGIDTNNMFEFWDWVGGRYSLWSAIGLSIALSVGFEHFEQLLSGAHAMDKHFAETPAEKNLPVLLALIGIWYNNFFGAETEAILPYDQYMHRFPAYFQQGNMESNGKYVDRNGHPVDYQTGPIIWGEPGTNGQHAFYQLIHQGTKLIPCDFIAPAISHNPLSDHHAKLLSNFFAQTEALAFGKSLEDVEAEFAAAGKTPEQVAHVAPFKVFEGNRPTNSILLREITPFSLGALIALYEHKIFTQGVILNIYTFDQWGVELGKQLANRILPELADDQEVTSHDSSTNALINRFKNWR</sequence>
<organism>
    <name type="scientific">Yersinia pseudotuberculosis serotype I (strain IP32953)</name>
    <dbReference type="NCBI Taxonomy" id="273123"/>
    <lineage>
        <taxon>Bacteria</taxon>
        <taxon>Pseudomonadati</taxon>
        <taxon>Pseudomonadota</taxon>
        <taxon>Gammaproteobacteria</taxon>
        <taxon>Enterobacterales</taxon>
        <taxon>Yersiniaceae</taxon>
        <taxon>Yersinia</taxon>
    </lineage>
</organism>
<accession>Q664W9</accession>
<feature type="chain" id="PRO_0000180776" description="Glucose-6-phosphate isomerase">
    <location>
        <begin position="1"/>
        <end position="548"/>
    </location>
</feature>
<feature type="active site" description="Proton donor" evidence="1">
    <location>
        <position position="355"/>
    </location>
</feature>
<feature type="active site" evidence="1">
    <location>
        <position position="386"/>
    </location>
</feature>
<feature type="active site" evidence="1">
    <location>
        <position position="514"/>
    </location>
</feature>
<comment type="function">
    <text evidence="1">Catalyzes the reversible isomerization of glucose-6-phosphate to fructose-6-phosphate.</text>
</comment>
<comment type="catalytic activity">
    <reaction evidence="1">
        <text>alpha-D-glucose 6-phosphate = beta-D-fructose 6-phosphate</text>
        <dbReference type="Rhea" id="RHEA:11816"/>
        <dbReference type="ChEBI" id="CHEBI:57634"/>
        <dbReference type="ChEBI" id="CHEBI:58225"/>
        <dbReference type="EC" id="5.3.1.9"/>
    </reaction>
</comment>
<comment type="pathway">
    <text evidence="1">Carbohydrate biosynthesis; gluconeogenesis.</text>
</comment>
<comment type="pathway">
    <text evidence="1">Carbohydrate degradation; glycolysis; D-glyceraldehyde 3-phosphate and glycerone phosphate from D-glucose: step 2/4.</text>
</comment>
<comment type="subcellular location">
    <subcellularLocation>
        <location evidence="1">Cytoplasm</location>
    </subcellularLocation>
</comment>
<comment type="similarity">
    <text evidence="1">Belongs to the GPI family.</text>
</comment>